<keyword id="KW-0175">Coiled coil</keyword>
<keyword id="KW-0472">Membrane</keyword>
<keyword id="KW-0496">Mitochondrion</keyword>
<keyword id="KW-0999">Mitochondrion inner membrane</keyword>
<keyword id="KW-0809">Transit peptide</keyword>
<keyword id="KW-0812">Transmembrane</keyword>
<keyword id="KW-1133">Transmembrane helix</keyword>
<gene>
    <name type="primary">MIC60</name>
    <name type="ORF">TRV_06779</name>
</gene>
<organism>
    <name type="scientific">Trichophyton verrucosum (strain HKI 0517)</name>
    <dbReference type="NCBI Taxonomy" id="663202"/>
    <lineage>
        <taxon>Eukaryota</taxon>
        <taxon>Fungi</taxon>
        <taxon>Dikarya</taxon>
        <taxon>Ascomycota</taxon>
        <taxon>Pezizomycotina</taxon>
        <taxon>Eurotiomycetes</taxon>
        <taxon>Eurotiomycetidae</taxon>
        <taxon>Onygenales</taxon>
        <taxon>Arthrodermataceae</taxon>
        <taxon>Trichophyton</taxon>
    </lineage>
</organism>
<dbReference type="EMBL" id="ACYE01000389">
    <property type="protein sequence ID" value="EFE38528.1"/>
    <property type="molecule type" value="Genomic_DNA"/>
</dbReference>
<dbReference type="RefSeq" id="XP_003019173.1">
    <property type="nucleotide sequence ID" value="XM_003019127.1"/>
</dbReference>
<dbReference type="SMR" id="D4DHX2"/>
<dbReference type="GeneID" id="9577170"/>
<dbReference type="KEGG" id="tve:TRV_06779"/>
<dbReference type="HOGENOM" id="CLU_008024_2_0_1"/>
<dbReference type="OrthoDB" id="5632at34384"/>
<dbReference type="Proteomes" id="UP000008383">
    <property type="component" value="Unassembled WGS sequence"/>
</dbReference>
<dbReference type="GO" id="GO:0061617">
    <property type="term" value="C:MICOS complex"/>
    <property type="evidence" value="ECO:0007669"/>
    <property type="project" value="TreeGrafter"/>
</dbReference>
<dbReference type="GO" id="GO:0042407">
    <property type="term" value="P:cristae formation"/>
    <property type="evidence" value="ECO:0007669"/>
    <property type="project" value="TreeGrafter"/>
</dbReference>
<dbReference type="InterPro" id="IPR019133">
    <property type="entry name" value="MIC60"/>
</dbReference>
<dbReference type="PANTHER" id="PTHR15415:SF7">
    <property type="entry name" value="MICOS COMPLEX SUBUNIT MIC60"/>
    <property type="match status" value="1"/>
</dbReference>
<dbReference type="PANTHER" id="PTHR15415">
    <property type="entry name" value="MITOFILIN"/>
    <property type="match status" value="1"/>
</dbReference>
<dbReference type="Pfam" id="PF09731">
    <property type="entry name" value="Mitofilin"/>
    <property type="match status" value="2"/>
</dbReference>
<evidence type="ECO:0000250" key="1"/>
<evidence type="ECO:0000255" key="2"/>
<evidence type="ECO:0000256" key="3">
    <source>
        <dbReference type="SAM" id="MobiDB-lite"/>
    </source>
</evidence>
<evidence type="ECO:0000305" key="4"/>
<proteinExistence type="inferred from homology"/>
<sequence length="683" mass="74802">MLRNSIAPSRGLGSLARQRLTTSGRNLITKRSYIEGKSAAWPSGRSIASVLPARKTSCATFTTSATRGNEQNIRSPPSPSSASAISPEGISRPASSSPAGQTSPGSSVNPPEPPKAQTGAPPPPPPPPPAPKAKGRFGRSLLYLVLTAGVAYAGGVWFSLRSDNFHDFFTEYVPYGEEAVLYFEELDFRRRFPNATRHINTRPAAPRDEGEKVTIPSKSGVSWKVAENEGTSDVTHKGRHMSAVDAEVFRTGGDAKSASNKPTTEDKKGSEKTGSKKDESKERVPVTDTKKSTVSLDEPRKPAVATVSSIEPLAALQDDPIIQELTKIVNGLIAVINADESASKLAAPIAKAKDDFLKLGEQISSIKKEAHIAAQEEIKNAHKEFERSATELVRRIDEVRSEEAAEYREEFETEREKLANSYQEKIKTEVERANAVAEQRLRNELVEQAIQLNRKFLSDVDTLVEKERQGRFSKLSELSAQVAELEKLTAGWNEVIGANLTTQQLQVAVDAVHSALESESMPRPFINELLAVKSLAGQDPIVNAAISSINPTAYQRGIPSTAQIIDRFRRVANEVRKASLLPEDAGVASHATSYLMSKVMFKKEASSSGDDVESILTRTEKLLEQGNLDDAAREMNALRGWSKLLSKDWLADVRRVLEVRQALEVCFLFLLPTLSLLIYYNEY</sequence>
<feature type="transit peptide" description="Mitochondrion" evidence="2">
    <location>
        <begin position="1"/>
        <end position="11"/>
    </location>
</feature>
<feature type="chain" id="PRO_0000406676" description="MICOS complex subunit MIC60">
    <location>
        <begin position="12"/>
        <end position="683"/>
    </location>
</feature>
<feature type="topological domain" description="Mitochondrial matrix" evidence="2">
    <location>
        <begin position="12"/>
        <end position="139"/>
    </location>
</feature>
<feature type="transmembrane region" description="Helical" evidence="2">
    <location>
        <begin position="140"/>
        <end position="160"/>
    </location>
</feature>
<feature type="topological domain" description="Mitochondrial intermembrane" evidence="2">
    <location>
        <begin position="161"/>
        <end position="683"/>
    </location>
</feature>
<feature type="region of interest" description="Disordered" evidence="3">
    <location>
        <begin position="61"/>
        <end position="134"/>
    </location>
</feature>
<feature type="region of interest" description="Disordered" evidence="3">
    <location>
        <begin position="199"/>
        <end position="300"/>
    </location>
</feature>
<feature type="coiled-coil region" evidence="2">
    <location>
        <begin position="367"/>
        <end position="444"/>
    </location>
</feature>
<feature type="compositionally biased region" description="Polar residues" evidence="3">
    <location>
        <begin position="61"/>
        <end position="74"/>
    </location>
</feature>
<feature type="compositionally biased region" description="Polar residues" evidence="3">
    <location>
        <begin position="93"/>
        <end position="109"/>
    </location>
</feature>
<feature type="compositionally biased region" description="Pro residues" evidence="3">
    <location>
        <begin position="110"/>
        <end position="131"/>
    </location>
</feature>
<feature type="compositionally biased region" description="Basic and acidic residues" evidence="3">
    <location>
        <begin position="263"/>
        <end position="300"/>
    </location>
</feature>
<protein>
    <recommendedName>
        <fullName>MICOS complex subunit MIC60</fullName>
    </recommendedName>
    <alternativeName>
        <fullName>Mitofilin</fullName>
    </alternativeName>
</protein>
<accession>D4DHX2</accession>
<comment type="function">
    <text evidence="1">Component of the MICOS complex, a large protein complex of the mitochondrial inner membrane that plays crucial roles in the maintenance of crista junctions, inner membrane architecture, and formation of contact sites to the outer membrane. Plays a role in keeping cristae membranes connected to the inner boundary membrane. Also promotes protein import via the mitochondrial intermembrane space assembly (MIA) pathway (By similarity).</text>
</comment>
<comment type="subunit">
    <text evidence="1">Component of the mitochondrial contact site and cristae organizing system (MICOS) complex.</text>
</comment>
<comment type="subcellular location">
    <subcellularLocation>
        <location evidence="1">Mitochondrion inner membrane</location>
        <topology evidence="1">Single-pass membrane protein</topology>
    </subcellularLocation>
</comment>
<comment type="similarity">
    <text evidence="4">Belongs to the MICOS complex subunit Mic60 family.</text>
</comment>
<name>MIC60_TRIVH</name>
<reference key="1">
    <citation type="journal article" date="2011" name="Genome Biol.">
        <title>Comparative and functional genomics provide insights into the pathogenicity of dermatophytic fungi.</title>
        <authorList>
            <person name="Burmester A."/>
            <person name="Shelest E."/>
            <person name="Gloeckner G."/>
            <person name="Heddergott C."/>
            <person name="Schindler S."/>
            <person name="Staib P."/>
            <person name="Heidel A."/>
            <person name="Felder M."/>
            <person name="Petzold A."/>
            <person name="Szafranski K."/>
            <person name="Feuermann M."/>
            <person name="Pedruzzi I."/>
            <person name="Priebe S."/>
            <person name="Groth M."/>
            <person name="Winkler R."/>
            <person name="Li W."/>
            <person name="Kniemeyer O."/>
            <person name="Schroeckh V."/>
            <person name="Hertweck C."/>
            <person name="Hube B."/>
            <person name="White T.C."/>
            <person name="Platzer M."/>
            <person name="Guthke R."/>
            <person name="Heitman J."/>
            <person name="Woestemeyer J."/>
            <person name="Zipfel P.F."/>
            <person name="Monod M."/>
            <person name="Brakhage A.A."/>
        </authorList>
    </citation>
    <scope>NUCLEOTIDE SEQUENCE [LARGE SCALE GENOMIC DNA]</scope>
    <source>
        <strain>HKI 0517</strain>
    </source>
</reference>